<sequence>MTPSAISPVAAGWIRRWLILMALMVYAIILVGGATRLTDSGLSITEWRPVSGALPPMSEAAWLVEFEKYRATTQYQLTNAGMALSEFQFIYWWEWGHRQIGRLIGLVAVAGFAFFAWRRWLGQGLGWKLVGLIALGGLQGAIGWWMVSSGIGETERVSVAPYRLMTHFTLALLILAVIAWLWLDLGRQQRAGAPRAAQRAAMALMGLIFVQMAAGALVAGLDAGRTYTDWPLMAGEVFPAHYIHAELGVRSFFEGREATQFNHRLLAYGLWAGSLAAAWAFRKTDVHREFAFLAVLVSAQAVWGILTLVNAAPMGLALVHQGLGVVTTLWAVYTVWRAGGPKTVAEINPPA</sequence>
<dbReference type="EC" id="1.17.99.9" evidence="1"/>
<dbReference type="EMBL" id="CP000158">
    <property type="protein sequence ID" value="ABI78637.1"/>
    <property type="molecule type" value="Genomic_DNA"/>
</dbReference>
<dbReference type="RefSeq" id="WP_011647311.1">
    <property type="nucleotide sequence ID" value="NC_008358.1"/>
</dbReference>
<dbReference type="SMR" id="Q0BZT0"/>
<dbReference type="STRING" id="228405.HNE_2318"/>
<dbReference type="KEGG" id="hne:HNE_2318"/>
<dbReference type="eggNOG" id="COG1612">
    <property type="taxonomic scope" value="Bacteria"/>
</dbReference>
<dbReference type="HOGENOM" id="CLU_017627_0_0_5"/>
<dbReference type="UniPathway" id="UPA00269">
    <property type="reaction ID" value="UER00713"/>
</dbReference>
<dbReference type="Proteomes" id="UP000001959">
    <property type="component" value="Chromosome"/>
</dbReference>
<dbReference type="GO" id="GO:0005886">
    <property type="term" value="C:plasma membrane"/>
    <property type="evidence" value="ECO:0007669"/>
    <property type="project" value="UniProtKB-SubCell"/>
</dbReference>
<dbReference type="GO" id="GO:0046872">
    <property type="term" value="F:metal ion binding"/>
    <property type="evidence" value="ECO:0007669"/>
    <property type="project" value="UniProtKB-KW"/>
</dbReference>
<dbReference type="GO" id="GO:0016653">
    <property type="term" value="F:oxidoreductase activity, acting on NAD(P)H, heme protein as acceptor"/>
    <property type="evidence" value="ECO:0007669"/>
    <property type="project" value="InterPro"/>
</dbReference>
<dbReference type="GO" id="GO:0006784">
    <property type="term" value="P:heme A biosynthetic process"/>
    <property type="evidence" value="ECO:0007669"/>
    <property type="project" value="UniProtKB-UniRule"/>
</dbReference>
<dbReference type="HAMAP" id="MF_01665">
    <property type="entry name" value="HemeA_synth_type2"/>
    <property type="match status" value="1"/>
</dbReference>
<dbReference type="InterPro" id="IPR003780">
    <property type="entry name" value="COX15/CtaA_fam"/>
</dbReference>
<dbReference type="InterPro" id="IPR023754">
    <property type="entry name" value="HemeA_Synthase_type2"/>
</dbReference>
<dbReference type="PANTHER" id="PTHR23289">
    <property type="entry name" value="CYTOCHROME C OXIDASE ASSEMBLY PROTEIN COX15"/>
    <property type="match status" value="1"/>
</dbReference>
<dbReference type="PANTHER" id="PTHR23289:SF2">
    <property type="entry name" value="CYTOCHROME C OXIDASE ASSEMBLY PROTEIN COX15 HOMOLOG"/>
    <property type="match status" value="1"/>
</dbReference>
<dbReference type="Pfam" id="PF02628">
    <property type="entry name" value="COX15-CtaA"/>
    <property type="match status" value="1"/>
</dbReference>
<comment type="function">
    <text evidence="1">Catalyzes the conversion of heme O to heme A by two successive hydroxylations of the methyl group at C8. The first hydroxylation forms heme I, the second hydroxylation results in an unstable dihydroxymethyl group, which spontaneously dehydrates, resulting in the formyl group of heme A.</text>
</comment>
<comment type="catalytic activity">
    <reaction evidence="1">
        <text>Fe(II)-heme o + 2 A + H2O = Fe(II)-heme a + 2 AH2</text>
        <dbReference type="Rhea" id="RHEA:63388"/>
        <dbReference type="ChEBI" id="CHEBI:13193"/>
        <dbReference type="ChEBI" id="CHEBI:15377"/>
        <dbReference type="ChEBI" id="CHEBI:17499"/>
        <dbReference type="ChEBI" id="CHEBI:60530"/>
        <dbReference type="ChEBI" id="CHEBI:61715"/>
        <dbReference type="EC" id="1.17.99.9"/>
    </reaction>
    <physiologicalReaction direction="left-to-right" evidence="1">
        <dbReference type="Rhea" id="RHEA:63389"/>
    </physiologicalReaction>
</comment>
<comment type="cofactor">
    <cofactor evidence="1">
        <name>heme b</name>
        <dbReference type="ChEBI" id="CHEBI:60344"/>
    </cofactor>
</comment>
<comment type="pathway">
    <text evidence="1">Porphyrin-containing compound metabolism; heme A biosynthesis; heme A from heme O: step 1/1.</text>
</comment>
<comment type="subunit">
    <text evidence="1">Interacts with CtaB.</text>
</comment>
<comment type="subcellular location">
    <subcellularLocation>
        <location evidence="1">Cell membrane</location>
        <topology evidence="1">Multi-pass membrane protein</topology>
    </subcellularLocation>
</comment>
<comment type="similarity">
    <text evidence="1">Belongs to the COX15/CtaA family. Type 2 subfamily.</text>
</comment>
<evidence type="ECO:0000255" key="1">
    <source>
        <dbReference type="HAMAP-Rule" id="MF_01665"/>
    </source>
</evidence>
<proteinExistence type="inferred from homology"/>
<organism>
    <name type="scientific">Hyphomonas neptunium (strain ATCC 15444)</name>
    <dbReference type="NCBI Taxonomy" id="228405"/>
    <lineage>
        <taxon>Bacteria</taxon>
        <taxon>Pseudomonadati</taxon>
        <taxon>Pseudomonadota</taxon>
        <taxon>Alphaproteobacteria</taxon>
        <taxon>Hyphomonadales</taxon>
        <taxon>Hyphomonadaceae</taxon>
        <taxon>Hyphomonas</taxon>
    </lineage>
</organism>
<protein>
    <recommendedName>
        <fullName evidence="1">Heme A synthase</fullName>
        <shortName evidence="1">HAS</shortName>
        <ecNumber evidence="1">1.17.99.9</ecNumber>
    </recommendedName>
    <alternativeName>
        <fullName evidence="1">Cytochrome aa3-controlling protein</fullName>
    </alternativeName>
</protein>
<keyword id="KW-1003">Cell membrane</keyword>
<keyword id="KW-0350">Heme biosynthesis</keyword>
<keyword id="KW-0408">Iron</keyword>
<keyword id="KW-0472">Membrane</keyword>
<keyword id="KW-0479">Metal-binding</keyword>
<keyword id="KW-0560">Oxidoreductase</keyword>
<keyword id="KW-1185">Reference proteome</keyword>
<keyword id="KW-0812">Transmembrane</keyword>
<keyword id="KW-1133">Transmembrane helix</keyword>
<feature type="chain" id="PRO_0000349039" description="Heme A synthase">
    <location>
        <begin position="1"/>
        <end position="351"/>
    </location>
</feature>
<feature type="transmembrane region" description="Helical" evidence="1">
    <location>
        <begin position="17"/>
        <end position="37"/>
    </location>
</feature>
<feature type="transmembrane region" description="Helical" evidence="1">
    <location>
        <begin position="103"/>
        <end position="123"/>
    </location>
</feature>
<feature type="transmembrane region" description="Helical" evidence="1">
    <location>
        <begin position="129"/>
        <end position="149"/>
    </location>
</feature>
<feature type="transmembrane region" description="Helical" evidence="1">
    <location>
        <begin position="164"/>
        <end position="184"/>
    </location>
</feature>
<feature type="transmembrane region" description="Helical" evidence="1">
    <location>
        <begin position="201"/>
        <end position="221"/>
    </location>
</feature>
<feature type="transmembrane region" description="Helical" evidence="1">
    <location>
        <begin position="261"/>
        <end position="281"/>
    </location>
</feature>
<feature type="transmembrane region" description="Helical" evidence="1">
    <location>
        <begin position="289"/>
        <end position="309"/>
    </location>
</feature>
<feature type="transmembrane region" description="Helical" evidence="1">
    <location>
        <begin position="316"/>
        <end position="336"/>
    </location>
</feature>
<feature type="binding site" description="axial binding residue" evidence="1">
    <location>
        <position position="263"/>
    </location>
    <ligand>
        <name>heme</name>
        <dbReference type="ChEBI" id="CHEBI:30413"/>
    </ligand>
    <ligandPart>
        <name>Fe</name>
        <dbReference type="ChEBI" id="CHEBI:18248"/>
    </ligandPart>
</feature>
<feature type="binding site" description="axial binding residue" evidence="1">
    <location>
        <position position="320"/>
    </location>
    <ligand>
        <name>heme</name>
        <dbReference type="ChEBI" id="CHEBI:30413"/>
    </ligand>
    <ligandPart>
        <name>Fe</name>
        <dbReference type="ChEBI" id="CHEBI:18248"/>
    </ligandPart>
</feature>
<reference key="1">
    <citation type="journal article" date="2006" name="J. Bacteriol.">
        <title>Comparative genomic evidence for a close relationship between the dimorphic prosthecate bacteria Hyphomonas neptunium and Caulobacter crescentus.</title>
        <authorList>
            <person name="Badger J.H."/>
            <person name="Hoover T.R."/>
            <person name="Brun Y.V."/>
            <person name="Weiner R.M."/>
            <person name="Laub M.T."/>
            <person name="Alexandre G."/>
            <person name="Mrazek J."/>
            <person name="Ren Q."/>
            <person name="Paulsen I.T."/>
            <person name="Nelson K.E."/>
            <person name="Khouri H.M."/>
            <person name="Radune D."/>
            <person name="Sosa J."/>
            <person name="Dodson R.J."/>
            <person name="Sullivan S.A."/>
            <person name="Rosovitz M.J."/>
            <person name="Madupu R."/>
            <person name="Brinkac L.M."/>
            <person name="Durkin A.S."/>
            <person name="Daugherty S.C."/>
            <person name="Kothari S.P."/>
            <person name="Giglio M.G."/>
            <person name="Zhou L."/>
            <person name="Haft D.H."/>
            <person name="Selengut J.D."/>
            <person name="Davidsen T.M."/>
            <person name="Yang Q."/>
            <person name="Zafar N."/>
            <person name="Ward N.L."/>
        </authorList>
    </citation>
    <scope>NUCLEOTIDE SEQUENCE [LARGE SCALE GENOMIC DNA]</scope>
    <source>
        <strain>ATCC 15444</strain>
    </source>
</reference>
<accession>Q0BZT0</accession>
<name>CTAA_HYPNA</name>
<gene>
    <name evidence="1" type="primary">ctaA</name>
    <name type="ordered locus">HNE_2318</name>
</gene>